<name>CYB_ASPTN</name>
<accession>P0C2N9</accession>
<accession>H9CP06</accession>
<geneLocation type="mitochondrion"/>
<gene>
    <name type="primary">cob</name>
    <name type="synonym">cytB</name>
</gene>
<protein>
    <recommendedName>
        <fullName>Cytochrome b</fullName>
    </recommendedName>
    <alternativeName>
        <fullName>Complex III subunit 3</fullName>
    </alternativeName>
    <alternativeName>
        <fullName>Complex III subunit III</fullName>
    </alternativeName>
    <alternativeName>
        <fullName>Cytochrome b-c1 complex subunit 3</fullName>
    </alternativeName>
    <alternativeName>
        <fullName>Ubiquinol-cytochrome-c reductase complex cytochrome b subunit</fullName>
    </alternativeName>
</protein>
<evidence type="ECO:0000250" key="1"/>
<evidence type="ECO:0000250" key="2">
    <source>
        <dbReference type="UniProtKB" id="P00157"/>
    </source>
</evidence>
<evidence type="ECO:0000250" key="3">
    <source>
        <dbReference type="UniProtKB" id="P00163"/>
    </source>
</evidence>
<evidence type="ECO:0000255" key="4">
    <source>
        <dbReference type="PROSITE-ProRule" id="PRU00967"/>
    </source>
</evidence>
<evidence type="ECO:0000255" key="5">
    <source>
        <dbReference type="PROSITE-ProRule" id="PRU00968"/>
    </source>
</evidence>
<reference key="1">
    <citation type="journal article" date="2012" name="BMC Genomics">
        <title>Sequencing of mitochondrial genomes of nine Aspergillus and Penicillium species identifies mobile introns and accessory genes as main sources of genome size variability.</title>
        <authorList>
            <person name="Joardar V."/>
            <person name="Abrams N.F."/>
            <person name="Hostetler J."/>
            <person name="Paukstelis P.J."/>
            <person name="Pakala S."/>
            <person name="Pakala S.B."/>
            <person name="Zafar N."/>
            <person name="Abolude O.O."/>
            <person name="Payne G."/>
            <person name="Andrianopoulos A."/>
            <person name="Denning D.W."/>
            <person name="Nierman W.C."/>
        </authorList>
    </citation>
    <scope>NUCLEOTIDE SEQUENCE [LARGE SCALE GENOMIC DNA]</scope>
    <source>
        <strain>NIH 2624 / FGSC A1156</strain>
    </source>
</reference>
<comment type="function">
    <text evidence="3">Component of the ubiquinol-cytochrome c reductase complex (complex III or cytochrome b-c1 complex) that is part of the mitochondrial respiratory chain. The b-c1 complex mediates electron transfer from ubiquinol to cytochrome c. Contributes to the generation of a proton gradient across the mitochondrial membrane that is then used for ATP synthesis.</text>
</comment>
<comment type="cofactor">
    <cofactor evidence="3">
        <name>heme b</name>
        <dbReference type="ChEBI" id="CHEBI:60344"/>
    </cofactor>
    <text evidence="3">Binds 2 heme b groups non-covalently.</text>
</comment>
<comment type="subunit">
    <text evidence="3">Fungal cytochrome b-c1 complex contains 10 subunits; 3 respiratory subunits, 2 core proteins and 5 low-molecular weight proteins. Cytochrome b-c1 complex is a homodimer.</text>
</comment>
<comment type="subcellular location">
    <subcellularLocation>
        <location evidence="3">Mitochondrion inner membrane</location>
        <topology evidence="3">Multi-pass membrane protein</topology>
    </subcellularLocation>
</comment>
<comment type="miscellaneous">
    <text evidence="1">Heme 1 (or BL or b562) is low-potential and absorbs at about 562 nm, and heme 2 (or BH or b566) is high-potential and absorbs at about 566 nm.</text>
</comment>
<comment type="similarity">
    <text evidence="4 5">Belongs to the cytochrome b family.</text>
</comment>
<comment type="caution">
    <text evidence="3">The protein contains only eight transmembrane helices, not nine as predicted by bioinformatics tools.</text>
</comment>
<sequence length="385" mass="43222">MRILKSHPLLKILNSYLIDSPQPSNISYLWNFGSLLGLCLGIQIVTGVTLAMHYTPSVLEAFNSVEHIMRDVNNGWLVRYLHSNTASAFFFLVYLHIGRGLYYGSYKSPRTLTWAIGTVILIVMMATAFLGYVLPYGQMSLWGATVITNLMSAIPWIGQDIVEFIWGGFSVNNATLNRFFALHFLLPFVLAALVIMHLIAMHDTVGSGNPLGISGNYDRLPFAPYFVFKDLVTIFIFFIVLSIFVFFMPNALGDSENYVMANPMQTPPAIVPEWYLLPFYAILRSIPNKLLGVIAMFAAILALMVMPITDLSKLRGVQFRPLSKVAFYVFVANFLILMQIGAKHVETPFIEFGQISTVLYFAHFFVIVPVVSLIENSLVELTTKK</sequence>
<dbReference type="EMBL" id="JQ355001">
    <property type="protein sequence ID" value="AFD96050.1"/>
    <property type="molecule type" value="Genomic_DNA"/>
</dbReference>
<dbReference type="SMR" id="P0C2N9"/>
<dbReference type="STRING" id="341663.P0C2N9"/>
<dbReference type="Proteomes" id="UP000007963">
    <property type="component" value="Mitochondrion"/>
</dbReference>
<dbReference type="GO" id="GO:0005743">
    <property type="term" value="C:mitochondrial inner membrane"/>
    <property type="evidence" value="ECO:0007669"/>
    <property type="project" value="UniProtKB-SubCell"/>
</dbReference>
<dbReference type="GO" id="GO:0045275">
    <property type="term" value="C:respiratory chain complex III"/>
    <property type="evidence" value="ECO:0007669"/>
    <property type="project" value="InterPro"/>
</dbReference>
<dbReference type="GO" id="GO:0046872">
    <property type="term" value="F:metal ion binding"/>
    <property type="evidence" value="ECO:0007669"/>
    <property type="project" value="UniProtKB-KW"/>
</dbReference>
<dbReference type="GO" id="GO:0008121">
    <property type="term" value="F:ubiquinol-cytochrome-c reductase activity"/>
    <property type="evidence" value="ECO:0007669"/>
    <property type="project" value="InterPro"/>
</dbReference>
<dbReference type="GO" id="GO:0006122">
    <property type="term" value="P:mitochondrial electron transport, ubiquinol to cytochrome c"/>
    <property type="evidence" value="ECO:0007669"/>
    <property type="project" value="TreeGrafter"/>
</dbReference>
<dbReference type="CDD" id="cd00290">
    <property type="entry name" value="cytochrome_b_C"/>
    <property type="match status" value="1"/>
</dbReference>
<dbReference type="CDD" id="cd00284">
    <property type="entry name" value="Cytochrome_b_N"/>
    <property type="match status" value="1"/>
</dbReference>
<dbReference type="FunFam" id="1.20.810.10:FF:000002">
    <property type="entry name" value="Cytochrome b"/>
    <property type="match status" value="1"/>
</dbReference>
<dbReference type="Gene3D" id="1.20.810.10">
    <property type="entry name" value="Cytochrome Bc1 Complex, Chain C"/>
    <property type="match status" value="1"/>
</dbReference>
<dbReference type="InterPro" id="IPR005798">
    <property type="entry name" value="Cyt_b/b6_C"/>
</dbReference>
<dbReference type="InterPro" id="IPR036150">
    <property type="entry name" value="Cyt_b/b6_C_sf"/>
</dbReference>
<dbReference type="InterPro" id="IPR005797">
    <property type="entry name" value="Cyt_b/b6_N"/>
</dbReference>
<dbReference type="InterPro" id="IPR027387">
    <property type="entry name" value="Cytb/b6-like_sf"/>
</dbReference>
<dbReference type="InterPro" id="IPR030689">
    <property type="entry name" value="Cytochrome_b"/>
</dbReference>
<dbReference type="InterPro" id="IPR048260">
    <property type="entry name" value="Cytochrome_b_C_euk/bac"/>
</dbReference>
<dbReference type="InterPro" id="IPR048259">
    <property type="entry name" value="Cytochrome_b_N_euk/bac"/>
</dbReference>
<dbReference type="InterPro" id="IPR016174">
    <property type="entry name" value="Di-haem_cyt_TM"/>
</dbReference>
<dbReference type="PANTHER" id="PTHR19271">
    <property type="entry name" value="CYTOCHROME B"/>
    <property type="match status" value="1"/>
</dbReference>
<dbReference type="PANTHER" id="PTHR19271:SF16">
    <property type="entry name" value="CYTOCHROME B"/>
    <property type="match status" value="1"/>
</dbReference>
<dbReference type="Pfam" id="PF00032">
    <property type="entry name" value="Cytochrom_B_C"/>
    <property type="match status" value="1"/>
</dbReference>
<dbReference type="Pfam" id="PF00033">
    <property type="entry name" value="Cytochrome_B"/>
    <property type="match status" value="1"/>
</dbReference>
<dbReference type="PIRSF" id="PIRSF038885">
    <property type="entry name" value="COB"/>
    <property type="match status" value="1"/>
</dbReference>
<dbReference type="SUPFAM" id="SSF81648">
    <property type="entry name" value="a domain/subunit of cytochrome bc1 complex (Ubiquinol-cytochrome c reductase)"/>
    <property type="match status" value="1"/>
</dbReference>
<dbReference type="SUPFAM" id="SSF81342">
    <property type="entry name" value="Transmembrane di-heme cytochromes"/>
    <property type="match status" value="1"/>
</dbReference>
<dbReference type="PROSITE" id="PS51003">
    <property type="entry name" value="CYTB_CTER"/>
    <property type="match status" value="1"/>
</dbReference>
<dbReference type="PROSITE" id="PS51002">
    <property type="entry name" value="CYTB_NTER"/>
    <property type="match status" value="1"/>
</dbReference>
<proteinExistence type="inferred from homology"/>
<feature type="chain" id="PRO_0000283707" description="Cytochrome b">
    <location>
        <begin position="1"/>
        <end position="385"/>
    </location>
</feature>
<feature type="transmembrane region" description="Helical" evidence="3">
    <location>
        <begin position="32"/>
        <end position="52"/>
    </location>
</feature>
<feature type="transmembrane region" description="Helical" evidence="3">
    <location>
        <begin position="76"/>
        <end position="98"/>
    </location>
</feature>
<feature type="transmembrane region" description="Helical" evidence="3">
    <location>
        <begin position="113"/>
        <end position="133"/>
    </location>
</feature>
<feature type="transmembrane region" description="Helical" evidence="3">
    <location>
        <begin position="179"/>
        <end position="199"/>
    </location>
</feature>
<feature type="transmembrane region" description="Helical" evidence="3">
    <location>
        <begin position="226"/>
        <end position="246"/>
    </location>
</feature>
<feature type="transmembrane region" description="Helical" evidence="3">
    <location>
        <begin position="290"/>
        <end position="310"/>
    </location>
</feature>
<feature type="transmembrane region" description="Helical" evidence="3">
    <location>
        <begin position="322"/>
        <end position="342"/>
    </location>
</feature>
<feature type="transmembrane region" description="Helical" evidence="3">
    <location>
        <begin position="349"/>
        <end position="369"/>
    </location>
</feature>
<feature type="binding site" description="axial binding residue" evidence="5">
    <location>
        <position position="82"/>
    </location>
    <ligand>
        <name>heme b</name>
        <dbReference type="ChEBI" id="CHEBI:60344"/>
        <label>b562</label>
    </ligand>
    <ligandPart>
        <name>Fe</name>
        <dbReference type="ChEBI" id="CHEBI:18248"/>
    </ligandPart>
</feature>
<feature type="binding site" description="axial binding residue" evidence="5">
    <location>
        <position position="96"/>
    </location>
    <ligand>
        <name>heme b</name>
        <dbReference type="ChEBI" id="CHEBI:60344"/>
        <label>b566</label>
    </ligand>
    <ligandPart>
        <name>Fe</name>
        <dbReference type="ChEBI" id="CHEBI:18248"/>
    </ligandPart>
</feature>
<feature type="binding site" description="axial binding residue" evidence="5">
    <location>
        <position position="183"/>
    </location>
    <ligand>
        <name>heme b</name>
        <dbReference type="ChEBI" id="CHEBI:60344"/>
        <label>b562</label>
    </ligand>
    <ligandPart>
        <name>Fe</name>
        <dbReference type="ChEBI" id="CHEBI:18248"/>
    </ligandPart>
</feature>
<feature type="binding site" description="axial binding residue" evidence="5">
    <location>
        <position position="197"/>
    </location>
    <ligand>
        <name>heme b</name>
        <dbReference type="ChEBI" id="CHEBI:60344"/>
        <label>b566</label>
    </ligand>
    <ligandPart>
        <name>Fe</name>
        <dbReference type="ChEBI" id="CHEBI:18248"/>
    </ligandPart>
</feature>
<feature type="binding site" evidence="2">
    <location>
        <position position="202"/>
    </location>
    <ligand>
        <name>a ubiquinone</name>
        <dbReference type="ChEBI" id="CHEBI:16389"/>
    </ligand>
</feature>
<organism>
    <name type="scientific">Aspergillus terreus (strain NIH 2624 / FGSC A1156)</name>
    <dbReference type="NCBI Taxonomy" id="341663"/>
    <lineage>
        <taxon>Eukaryota</taxon>
        <taxon>Fungi</taxon>
        <taxon>Dikarya</taxon>
        <taxon>Ascomycota</taxon>
        <taxon>Pezizomycotina</taxon>
        <taxon>Eurotiomycetes</taxon>
        <taxon>Eurotiomycetidae</taxon>
        <taxon>Eurotiales</taxon>
        <taxon>Aspergillaceae</taxon>
        <taxon>Aspergillus</taxon>
        <taxon>Aspergillus subgen. Circumdati</taxon>
    </lineage>
</organism>
<keyword id="KW-0249">Electron transport</keyword>
<keyword id="KW-0349">Heme</keyword>
<keyword id="KW-0408">Iron</keyword>
<keyword id="KW-0472">Membrane</keyword>
<keyword id="KW-0479">Metal-binding</keyword>
<keyword id="KW-0496">Mitochondrion</keyword>
<keyword id="KW-0999">Mitochondrion inner membrane</keyword>
<keyword id="KW-1185">Reference proteome</keyword>
<keyword id="KW-0679">Respiratory chain</keyword>
<keyword id="KW-0812">Transmembrane</keyword>
<keyword id="KW-1133">Transmembrane helix</keyword>
<keyword id="KW-0813">Transport</keyword>
<keyword id="KW-0830">Ubiquinone</keyword>